<comment type="function">
    <text evidence="1">The glycine cleavage system catalyzes the degradation of glycine. The H protein shuttles the methylamine group of glycine from the P protein to the T protein.</text>
</comment>
<comment type="cofactor">
    <cofactor evidence="1">
        <name>(R)-lipoate</name>
        <dbReference type="ChEBI" id="CHEBI:83088"/>
    </cofactor>
    <text evidence="1">Binds 1 lipoyl cofactor covalently.</text>
</comment>
<comment type="subunit">
    <text evidence="1">The glycine cleavage system is composed of four proteins: P, T, L and H.</text>
</comment>
<comment type="similarity">
    <text evidence="1">Belongs to the GcvH family.</text>
</comment>
<protein>
    <recommendedName>
        <fullName evidence="1">Glycine cleavage system H protein</fullName>
    </recommendedName>
</protein>
<proteinExistence type="inferred from homology"/>
<name>GCSH_PARD8</name>
<accession>A6LGR3</accession>
<gene>
    <name evidence="1" type="primary">gcvH</name>
    <name type="ordered locus">BDI_3171</name>
</gene>
<feature type="chain" id="PRO_0000302404" description="Glycine cleavage system H protein">
    <location>
        <begin position="1"/>
        <end position="126"/>
    </location>
</feature>
<feature type="domain" description="Lipoyl-binding" evidence="2">
    <location>
        <begin position="22"/>
        <end position="104"/>
    </location>
</feature>
<feature type="modified residue" description="N6-lipoyllysine" evidence="1">
    <location>
        <position position="63"/>
    </location>
</feature>
<evidence type="ECO:0000255" key="1">
    <source>
        <dbReference type="HAMAP-Rule" id="MF_00272"/>
    </source>
</evidence>
<evidence type="ECO:0000255" key="2">
    <source>
        <dbReference type="PROSITE-ProRule" id="PRU01066"/>
    </source>
</evidence>
<organism>
    <name type="scientific">Parabacteroides distasonis (strain ATCC 8503 / DSM 20701 / CIP 104284 / JCM 5825 / NCTC 11152)</name>
    <dbReference type="NCBI Taxonomy" id="435591"/>
    <lineage>
        <taxon>Bacteria</taxon>
        <taxon>Pseudomonadati</taxon>
        <taxon>Bacteroidota</taxon>
        <taxon>Bacteroidia</taxon>
        <taxon>Bacteroidales</taxon>
        <taxon>Tannerellaceae</taxon>
        <taxon>Parabacteroides</taxon>
    </lineage>
</organism>
<sequence>MNFPADLKYTKDHEWIRVEGDVAYVGITDYAQGELGEIVYVDITTEGETVAKEEVFGTIEAVKTVSDLFMPVSGEVLEVNAELEDAPELVNEDAYGKGWLIKISLTDASELEELLSAEDYQKLIAK</sequence>
<dbReference type="EMBL" id="CP000140">
    <property type="protein sequence ID" value="ABR44877.1"/>
    <property type="molecule type" value="Genomic_DNA"/>
</dbReference>
<dbReference type="RefSeq" id="WP_008773046.1">
    <property type="nucleotide sequence ID" value="NC_009615.1"/>
</dbReference>
<dbReference type="SMR" id="A6LGR3"/>
<dbReference type="STRING" id="435591.BDI_3171"/>
<dbReference type="PaxDb" id="435591-BDI_3171"/>
<dbReference type="KEGG" id="pdi:BDI_3171"/>
<dbReference type="eggNOG" id="COG0509">
    <property type="taxonomic scope" value="Bacteria"/>
</dbReference>
<dbReference type="HOGENOM" id="CLU_097408_2_2_10"/>
<dbReference type="BioCyc" id="PDIS435591:G1G5A-3251-MONOMER"/>
<dbReference type="Proteomes" id="UP000000566">
    <property type="component" value="Chromosome"/>
</dbReference>
<dbReference type="GO" id="GO:0005829">
    <property type="term" value="C:cytosol"/>
    <property type="evidence" value="ECO:0007669"/>
    <property type="project" value="TreeGrafter"/>
</dbReference>
<dbReference type="GO" id="GO:0005960">
    <property type="term" value="C:glycine cleavage complex"/>
    <property type="evidence" value="ECO:0007669"/>
    <property type="project" value="InterPro"/>
</dbReference>
<dbReference type="GO" id="GO:0019464">
    <property type="term" value="P:glycine decarboxylation via glycine cleavage system"/>
    <property type="evidence" value="ECO:0007669"/>
    <property type="project" value="UniProtKB-UniRule"/>
</dbReference>
<dbReference type="CDD" id="cd06848">
    <property type="entry name" value="GCS_H"/>
    <property type="match status" value="1"/>
</dbReference>
<dbReference type="Gene3D" id="2.40.50.100">
    <property type="match status" value="1"/>
</dbReference>
<dbReference type="HAMAP" id="MF_00272">
    <property type="entry name" value="GcvH"/>
    <property type="match status" value="1"/>
</dbReference>
<dbReference type="InterPro" id="IPR003016">
    <property type="entry name" value="2-oxoA_DH_lipoyl-BS"/>
</dbReference>
<dbReference type="InterPro" id="IPR000089">
    <property type="entry name" value="Biotin_lipoyl"/>
</dbReference>
<dbReference type="InterPro" id="IPR002930">
    <property type="entry name" value="GCV_H"/>
</dbReference>
<dbReference type="InterPro" id="IPR033753">
    <property type="entry name" value="GCV_H/Fam206"/>
</dbReference>
<dbReference type="InterPro" id="IPR017453">
    <property type="entry name" value="GCV_H_sub"/>
</dbReference>
<dbReference type="InterPro" id="IPR011053">
    <property type="entry name" value="Single_hybrid_motif"/>
</dbReference>
<dbReference type="NCBIfam" id="TIGR00527">
    <property type="entry name" value="gcvH"/>
    <property type="match status" value="1"/>
</dbReference>
<dbReference type="NCBIfam" id="NF002270">
    <property type="entry name" value="PRK01202.1"/>
    <property type="match status" value="1"/>
</dbReference>
<dbReference type="PANTHER" id="PTHR11715">
    <property type="entry name" value="GLYCINE CLEAVAGE SYSTEM H PROTEIN"/>
    <property type="match status" value="1"/>
</dbReference>
<dbReference type="PANTHER" id="PTHR11715:SF3">
    <property type="entry name" value="GLYCINE CLEAVAGE SYSTEM H PROTEIN-RELATED"/>
    <property type="match status" value="1"/>
</dbReference>
<dbReference type="Pfam" id="PF01597">
    <property type="entry name" value="GCV_H"/>
    <property type="match status" value="1"/>
</dbReference>
<dbReference type="SUPFAM" id="SSF51230">
    <property type="entry name" value="Single hybrid motif"/>
    <property type="match status" value="1"/>
</dbReference>
<dbReference type="PROSITE" id="PS50968">
    <property type="entry name" value="BIOTINYL_LIPOYL"/>
    <property type="match status" value="1"/>
</dbReference>
<dbReference type="PROSITE" id="PS00189">
    <property type="entry name" value="LIPOYL"/>
    <property type="match status" value="1"/>
</dbReference>
<reference key="1">
    <citation type="journal article" date="2007" name="PLoS Biol.">
        <title>Evolution of symbiotic bacteria in the distal human intestine.</title>
        <authorList>
            <person name="Xu J."/>
            <person name="Mahowald M.A."/>
            <person name="Ley R.E."/>
            <person name="Lozupone C.A."/>
            <person name="Hamady M."/>
            <person name="Martens E.C."/>
            <person name="Henrissat B."/>
            <person name="Coutinho P.M."/>
            <person name="Minx P."/>
            <person name="Latreille P."/>
            <person name="Cordum H."/>
            <person name="Van Brunt A."/>
            <person name="Kim K."/>
            <person name="Fulton R.S."/>
            <person name="Fulton L.A."/>
            <person name="Clifton S.W."/>
            <person name="Wilson R.K."/>
            <person name="Knight R.D."/>
            <person name="Gordon J.I."/>
        </authorList>
    </citation>
    <scope>NUCLEOTIDE SEQUENCE [LARGE SCALE GENOMIC DNA]</scope>
    <source>
        <strain>ATCC 8503 / DSM 20701 / CIP 104284 / JCM 5825 / NCTC 11152</strain>
    </source>
</reference>
<keyword id="KW-0450">Lipoyl</keyword>
<keyword id="KW-1185">Reference proteome</keyword>